<organism>
    <name type="scientific">Plasmopara viticola</name>
    <name type="common">Downy mildew of grapevine</name>
    <name type="synonym">Botrytis viticola</name>
    <dbReference type="NCBI Taxonomy" id="143451"/>
    <lineage>
        <taxon>Eukaryota</taxon>
        <taxon>Sar</taxon>
        <taxon>Stramenopiles</taxon>
        <taxon>Oomycota</taxon>
        <taxon>Peronosporales</taxon>
        <taxon>Peronosporaceae</taxon>
        <taxon>Plasmopara</taxon>
    </lineage>
</organism>
<dbReference type="GlyCosmos" id="P0CV09">
    <property type="glycosylation" value="3 sites, No reported glycans"/>
</dbReference>
<dbReference type="GO" id="GO:0005576">
    <property type="term" value="C:extracellular region"/>
    <property type="evidence" value="ECO:0007669"/>
    <property type="project" value="UniProtKB-SubCell"/>
</dbReference>
<dbReference type="GO" id="GO:0030430">
    <property type="term" value="C:host cell cytoplasm"/>
    <property type="evidence" value="ECO:0007669"/>
    <property type="project" value="UniProtKB-SubCell"/>
</dbReference>
<dbReference type="GO" id="GO:0042025">
    <property type="term" value="C:host cell nucleus"/>
    <property type="evidence" value="ECO:0007669"/>
    <property type="project" value="UniProtKB-SubCell"/>
</dbReference>
<name>RLR40_PLAVT</name>
<protein>
    <recommendedName>
        <fullName evidence="4">Secreted RxLR effector protein 40</fullName>
    </recommendedName>
</protein>
<proteinExistence type="evidence at transcript level"/>
<sequence>MRLYTQVVAASLVATLAIVDSKVSNAIAGQGNNLRFLRQDNATVARVSEDGERGGLLADEKDIMAIADHLIRLNYSLSYARKVLGKFANYEYAIAKVEEKIKKRTVSYMFLDEKFLTQEEAEGKFIEWILEGKTQEQLEREFDIFTRPESKRAKKIQEVNKFAIRAYLDWLRNLRARSFRMTMMEYTNPSNAFATFDRHGHSRNKILSMFDAWVAKGTLLDVVKDRLGFNKPMKPADMFHSDNFVAYATYAQMLREKNNSLRPPRLDSVSTPSN</sequence>
<reference key="1">
    <citation type="journal article" date="2018" name="Front. Plant Sci.">
        <title>In planta functional analysis and subcellular localization of the oomycete pathogen Plasmopara viticola candidate RXLR effector repertoire.</title>
        <authorList>
            <person name="Liu Y."/>
            <person name="Lan X."/>
            <person name="Song S."/>
            <person name="Yin L."/>
            <person name="Dry I.B."/>
            <person name="Qu J."/>
            <person name="Xiang J."/>
            <person name="Lu J."/>
        </authorList>
    </citation>
    <scope>NUCLEOTIDE SEQUENCE [MRNA]</scope>
    <scope>DOMAIN</scope>
    <scope>FUNCTION</scope>
    <scope>SUBCELLULAR LOCATION</scope>
</reference>
<keyword id="KW-0325">Glycoprotein</keyword>
<keyword id="KW-1035">Host cytoplasm</keyword>
<keyword id="KW-1048">Host nucleus</keyword>
<keyword id="KW-0964">Secreted</keyword>
<keyword id="KW-0732">Signal</keyword>
<keyword id="KW-0843">Virulence</keyword>
<evidence type="ECO:0000255" key="1"/>
<evidence type="ECO:0000255" key="2">
    <source>
        <dbReference type="PROSITE-ProRule" id="PRU00498"/>
    </source>
</evidence>
<evidence type="ECO:0000269" key="3">
    <source>
    </source>
</evidence>
<evidence type="ECO:0000303" key="4">
    <source>
    </source>
</evidence>
<evidence type="ECO:0000305" key="5"/>
<evidence type="ECO:0000305" key="6">
    <source>
    </source>
</evidence>
<accession>P0CV09</accession>
<gene>
    <name evidence="4" type="primary">RXLR40</name>
</gene>
<comment type="function">
    <text evidence="3">Secreted effector that completely suppresses the host cell death induced by cell death-inducing proteins.</text>
</comment>
<comment type="subcellular location">
    <subcellularLocation>
        <location evidence="3">Secreted</location>
    </subcellularLocation>
    <subcellularLocation>
        <location evidence="3">Host nucleus</location>
    </subcellularLocation>
    <subcellularLocation>
        <location evidence="3">Host cytoplasm</location>
    </subcellularLocation>
    <text evidence="3">Localizes to bubble-like structures within the nucleus.</text>
</comment>
<comment type="domain">
    <text evidence="6">The RxLR-dEER motif acts to carry the protein into the host cell cytoplasm through binding to cell surface phosphatidylinositol-3-phosphate.</text>
</comment>
<comment type="similarity">
    <text evidence="5">Belongs to the RxLR effector family.</text>
</comment>
<feature type="signal peptide" evidence="1">
    <location>
        <begin position="1"/>
        <end position="21"/>
    </location>
</feature>
<feature type="chain" id="PRO_0000447918" description="Secreted RxLR effector protein 40">
    <location>
        <begin position="22"/>
        <end position="274"/>
    </location>
</feature>
<feature type="short sequence motif" description="RxLR-dEER" evidence="6">
    <location>
        <begin position="35"/>
        <end position="53"/>
    </location>
</feature>
<feature type="glycosylation site" description="N-linked (GlcNAc...) asparagine" evidence="2">
    <location>
        <position position="41"/>
    </location>
</feature>
<feature type="glycosylation site" description="N-linked (GlcNAc...) asparagine" evidence="2">
    <location>
        <position position="74"/>
    </location>
</feature>
<feature type="glycosylation site" description="N-linked (GlcNAc...) asparagine" evidence="2">
    <location>
        <position position="258"/>
    </location>
</feature>